<feature type="chain" id="PRO_1000025393" description="Co-chaperonin GroES">
    <location>
        <begin position="1"/>
        <end position="92"/>
    </location>
</feature>
<comment type="function">
    <text evidence="1">Together with the chaperonin GroEL, plays an essential role in assisting protein folding. The GroEL-GroES system forms a nano-cage that allows encapsulation of the non-native substrate proteins and provides a physical environment optimized to promote and accelerate protein folding. GroES binds to the apical surface of the GroEL ring, thereby capping the opening of the GroEL channel.</text>
</comment>
<comment type="subunit">
    <text evidence="1">Heptamer of 7 subunits arranged in a ring. Interacts with the chaperonin GroEL.</text>
</comment>
<comment type="subcellular location">
    <subcellularLocation>
        <location evidence="1">Cytoplasm</location>
    </subcellularLocation>
</comment>
<comment type="similarity">
    <text evidence="1">Belongs to the GroES chaperonin family.</text>
</comment>
<name>CH10_THEP1</name>
<gene>
    <name evidence="1" type="primary">groES</name>
    <name evidence="1" type="synonym">groS</name>
    <name type="ordered locus">Tpet_0416</name>
</gene>
<protein>
    <recommendedName>
        <fullName evidence="1">Co-chaperonin GroES</fullName>
    </recommendedName>
    <alternativeName>
        <fullName evidence="1">10 kDa chaperonin</fullName>
    </alternativeName>
    <alternativeName>
        <fullName evidence="1">Chaperonin-10</fullName>
        <shortName evidence="1">Cpn10</shortName>
    </alternativeName>
</protein>
<sequence length="92" mass="10347">MMKVIPLGERLLIKPIKEEKKTEGGIVLPDSAKEKPMKAEVVAVGKIDDEEKFDIKVGDKVIYSKYAGTEIKIDDEDYIIIDVNDILAKIEE</sequence>
<dbReference type="EMBL" id="CP000702">
    <property type="protein sequence ID" value="ABQ46440.1"/>
    <property type="molecule type" value="Genomic_DNA"/>
</dbReference>
<dbReference type="SMR" id="A5IJR7"/>
<dbReference type="STRING" id="390874.Tpet_0416"/>
<dbReference type="KEGG" id="tpt:Tpet_0416"/>
<dbReference type="eggNOG" id="COG0234">
    <property type="taxonomic scope" value="Bacteria"/>
</dbReference>
<dbReference type="HOGENOM" id="CLU_132825_2_0_0"/>
<dbReference type="Proteomes" id="UP000006558">
    <property type="component" value="Chromosome"/>
</dbReference>
<dbReference type="GO" id="GO:0005737">
    <property type="term" value="C:cytoplasm"/>
    <property type="evidence" value="ECO:0007669"/>
    <property type="project" value="UniProtKB-SubCell"/>
</dbReference>
<dbReference type="GO" id="GO:0005524">
    <property type="term" value="F:ATP binding"/>
    <property type="evidence" value="ECO:0007669"/>
    <property type="project" value="InterPro"/>
</dbReference>
<dbReference type="GO" id="GO:0046872">
    <property type="term" value="F:metal ion binding"/>
    <property type="evidence" value="ECO:0007669"/>
    <property type="project" value="TreeGrafter"/>
</dbReference>
<dbReference type="GO" id="GO:0044183">
    <property type="term" value="F:protein folding chaperone"/>
    <property type="evidence" value="ECO:0007669"/>
    <property type="project" value="InterPro"/>
</dbReference>
<dbReference type="GO" id="GO:0051087">
    <property type="term" value="F:protein-folding chaperone binding"/>
    <property type="evidence" value="ECO:0007669"/>
    <property type="project" value="TreeGrafter"/>
</dbReference>
<dbReference type="GO" id="GO:0051082">
    <property type="term" value="F:unfolded protein binding"/>
    <property type="evidence" value="ECO:0007669"/>
    <property type="project" value="TreeGrafter"/>
</dbReference>
<dbReference type="GO" id="GO:0051085">
    <property type="term" value="P:chaperone cofactor-dependent protein refolding"/>
    <property type="evidence" value="ECO:0007669"/>
    <property type="project" value="TreeGrafter"/>
</dbReference>
<dbReference type="CDD" id="cd00320">
    <property type="entry name" value="cpn10"/>
    <property type="match status" value="1"/>
</dbReference>
<dbReference type="FunFam" id="2.30.33.40:FF:000001">
    <property type="entry name" value="10 kDa chaperonin"/>
    <property type="match status" value="1"/>
</dbReference>
<dbReference type="Gene3D" id="2.30.33.40">
    <property type="entry name" value="GroES chaperonin"/>
    <property type="match status" value="1"/>
</dbReference>
<dbReference type="HAMAP" id="MF_00580">
    <property type="entry name" value="CH10"/>
    <property type="match status" value="1"/>
</dbReference>
<dbReference type="InterPro" id="IPR020818">
    <property type="entry name" value="Chaperonin_GroES"/>
</dbReference>
<dbReference type="InterPro" id="IPR037124">
    <property type="entry name" value="Chaperonin_GroES_sf"/>
</dbReference>
<dbReference type="InterPro" id="IPR018369">
    <property type="entry name" value="Chaprnonin_Cpn10_CS"/>
</dbReference>
<dbReference type="InterPro" id="IPR011032">
    <property type="entry name" value="GroES-like_sf"/>
</dbReference>
<dbReference type="NCBIfam" id="NF001531">
    <property type="entry name" value="PRK00364.2-2"/>
    <property type="match status" value="1"/>
</dbReference>
<dbReference type="NCBIfam" id="NF011106">
    <property type="entry name" value="PRK14533.1"/>
    <property type="match status" value="1"/>
</dbReference>
<dbReference type="PANTHER" id="PTHR10772">
    <property type="entry name" value="10 KDA HEAT SHOCK PROTEIN"/>
    <property type="match status" value="1"/>
</dbReference>
<dbReference type="PANTHER" id="PTHR10772:SF63">
    <property type="entry name" value="20 KDA CHAPERONIN, CHLOROPLASTIC"/>
    <property type="match status" value="1"/>
</dbReference>
<dbReference type="Pfam" id="PF00166">
    <property type="entry name" value="Cpn10"/>
    <property type="match status" value="1"/>
</dbReference>
<dbReference type="PRINTS" id="PR00297">
    <property type="entry name" value="CHAPERONIN10"/>
</dbReference>
<dbReference type="SMART" id="SM00883">
    <property type="entry name" value="Cpn10"/>
    <property type="match status" value="1"/>
</dbReference>
<dbReference type="SUPFAM" id="SSF50129">
    <property type="entry name" value="GroES-like"/>
    <property type="match status" value="1"/>
</dbReference>
<dbReference type="PROSITE" id="PS00681">
    <property type="entry name" value="CHAPERONINS_CPN10"/>
    <property type="match status" value="1"/>
</dbReference>
<organism>
    <name type="scientific">Thermotoga petrophila (strain ATCC BAA-488 / DSM 13995 / JCM 10881 / RKU-1)</name>
    <dbReference type="NCBI Taxonomy" id="390874"/>
    <lineage>
        <taxon>Bacteria</taxon>
        <taxon>Thermotogati</taxon>
        <taxon>Thermotogota</taxon>
        <taxon>Thermotogae</taxon>
        <taxon>Thermotogales</taxon>
        <taxon>Thermotogaceae</taxon>
        <taxon>Thermotoga</taxon>
    </lineage>
</organism>
<keyword id="KW-0143">Chaperone</keyword>
<keyword id="KW-0963">Cytoplasm</keyword>
<evidence type="ECO:0000255" key="1">
    <source>
        <dbReference type="HAMAP-Rule" id="MF_00580"/>
    </source>
</evidence>
<proteinExistence type="inferred from homology"/>
<reference key="1">
    <citation type="submission" date="2007-05" db="EMBL/GenBank/DDBJ databases">
        <title>Complete sequence of Thermotoga petrophila RKU-1.</title>
        <authorList>
            <consortium name="US DOE Joint Genome Institute"/>
            <person name="Copeland A."/>
            <person name="Lucas S."/>
            <person name="Lapidus A."/>
            <person name="Barry K."/>
            <person name="Glavina del Rio T."/>
            <person name="Dalin E."/>
            <person name="Tice H."/>
            <person name="Pitluck S."/>
            <person name="Sims D."/>
            <person name="Brettin T."/>
            <person name="Bruce D."/>
            <person name="Detter J.C."/>
            <person name="Han C."/>
            <person name="Tapia R."/>
            <person name="Schmutz J."/>
            <person name="Larimer F."/>
            <person name="Land M."/>
            <person name="Hauser L."/>
            <person name="Kyrpides N."/>
            <person name="Mikhailova N."/>
            <person name="Nelson K."/>
            <person name="Gogarten J.P."/>
            <person name="Noll K."/>
            <person name="Richardson P."/>
        </authorList>
    </citation>
    <scope>NUCLEOTIDE SEQUENCE [LARGE SCALE GENOMIC DNA]</scope>
    <source>
        <strain>ATCC BAA-488 / DSM 13995 / JCM 10881 / RKU-1</strain>
    </source>
</reference>
<accession>A5IJR7</accession>